<gene>
    <name evidence="1" type="primary">fabH</name>
    <name type="ordered locus">RHOS4_12010</name>
    <name type="ORF">RSP_2612</name>
</gene>
<accession>Q3J365</accession>
<sequence>MTIRAVVRGVGHYLPDRVVPNSELEAIVETTDEWIRTRSGIERRHFAAEGQTTSDLAARAARAALEDAGLQPDDIDTLIVATSTADLTFPSAATMVQAALGMTRGFAFDVQAVCAGFVYALANADALIRSGQAQRVLVIGAETFSRLMDWNDRATCVLFGDGAGAVVLEGTESAGTSADRGILATDLHSDGRFKDLLYVDGGSSTGTTGHLRMQGREVFRHAVEKLAETAHTALEKAGLGAGDVDWIVPHQANLRIISATAQRMQVPMDRVILTVQDHGNTSAASIPLALSVGKARGQIKEGDLLVTEAIGGGLAWGSVVLRW</sequence>
<evidence type="ECO:0000255" key="1">
    <source>
        <dbReference type="HAMAP-Rule" id="MF_01815"/>
    </source>
</evidence>
<comment type="function">
    <text evidence="1">Catalyzes the condensation reaction of fatty acid synthesis by the addition to an acyl acceptor of two carbons from malonyl-ACP. Catalyzes the first condensation reaction which initiates fatty acid synthesis and may therefore play a role in governing the total rate of fatty acid production. Possesses both acetoacetyl-ACP synthase and acetyl transacylase activities. Its substrate specificity determines the biosynthesis of branched-chain and/or straight-chain of fatty acids.</text>
</comment>
<comment type="catalytic activity">
    <reaction evidence="1">
        <text>malonyl-[ACP] + acetyl-CoA + H(+) = 3-oxobutanoyl-[ACP] + CO2 + CoA</text>
        <dbReference type="Rhea" id="RHEA:12080"/>
        <dbReference type="Rhea" id="RHEA-COMP:9623"/>
        <dbReference type="Rhea" id="RHEA-COMP:9625"/>
        <dbReference type="ChEBI" id="CHEBI:15378"/>
        <dbReference type="ChEBI" id="CHEBI:16526"/>
        <dbReference type="ChEBI" id="CHEBI:57287"/>
        <dbReference type="ChEBI" id="CHEBI:57288"/>
        <dbReference type="ChEBI" id="CHEBI:78449"/>
        <dbReference type="ChEBI" id="CHEBI:78450"/>
        <dbReference type="EC" id="2.3.1.180"/>
    </reaction>
</comment>
<comment type="pathway">
    <text evidence="1">Lipid metabolism; fatty acid biosynthesis.</text>
</comment>
<comment type="subunit">
    <text evidence="1">Homodimer.</text>
</comment>
<comment type="subcellular location">
    <subcellularLocation>
        <location evidence="1">Cytoplasm</location>
    </subcellularLocation>
</comment>
<comment type="domain">
    <text evidence="1">The last Arg residue of the ACP-binding site is essential for the weak association between ACP/AcpP and FabH.</text>
</comment>
<comment type="similarity">
    <text evidence="1">Belongs to the thiolase-like superfamily. FabH family.</text>
</comment>
<reference key="1">
    <citation type="submission" date="2005-09" db="EMBL/GenBank/DDBJ databases">
        <title>Complete sequence of chromosome 1 of Rhodobacter sphaeroides 2.4.1.</title>
        <authorList>
            <person name="Copeland A."/>
            <person name="Lucas S."/>
            <person name="Lapidus A."/>
            <person name="Barry K."/>
            <person name="Detter J.C."/>
            <person name="Glavina T."/>
            <person name="Hammon N."/>
            <person name="Israni S."/>
            <person name="Pitluck S."/>
            <person name="Richardson P."/>
            <person name="Mackenzie C."/>
            <person name="Choudhary M."/>
            <person name="Larimer F."/>
            <person name="Hauser L.J."/>
            <person name="Land M."/>
            <person name="Donohue T.J."/>
            <person name="Kaplan S."/>
        </authorList>
    </citation>
    <scope>NUCLEOTIDE SEQUENCE [LARGE SCALE GENOMIC DNA]</scope>
    <source>
        <strain>ATCC 17023 / DSM 158 / JCM 6121 / CCUG 31486 / LMG 2827 / NBRC 12203 / NCIMB 8253 / ATH 2.4.1.</strain>
    </source>
</reference>
<proteinExistence type="inferred from homology"/>
<keyword id="KW-0012">Acyltransferase</keyword>
<keyword id="KW-0963">Cytoplasm</keyword>
<keyword id="KW-0275">Fatty acid biosynthesis</keyword>
<keyword id="KW-0276">Fatty acid metabolism</keyword>
<keyword id="KW-0444">Lipid biosynthesis</keyword>
<keyword id="KW-0443">Lipid metabolism</keyword>
<keyword id="KW-0511">Multifunctional enzyme</keyword>
<keyword id="KW-1185">Reference proteome</keyword>
<keyword id="KW-0808">Transferase</keyword>
<feature type="chain" id="PRO_1000056396" description="Beta-ketoacyl-[acyl-carrier-protein] synthase III">
    <location>
        <begin position="1"/>
        <end position="323"/>
    </location>
</feature>
<feature type="region of interest" description="ACP-binding" evidence="1">
    <location>
        <begin position="251"/>
        <end position="255"/>
    </location>
</feature>
<feature type="active site" evidence="1">
    <location>
        <position position="114"/>
    </location>
</feature>
<feature type="active site" evidence="1">
    <location>
        <position position="250"/>
    </location>
</feature>
<feature type="active site" evidence="1">
    <location>
        <position position="280"/>
    </location>
</feature>
<name>FABH_CERS4</name>
<dbReference type="EC" id="2.3.1.180" evidence="1"/>
<dbReference type="EMBL" id="CP000143">
    <property type="protein sequence ID" value="ABA78769.1"/>
    <property type="molecule type" value="Genomic_DNA"/>
</dbReference>
<dbReference type="RefSeq" id="WP_011337607.1">
    <property type="nucleotide sequence ID" value="NZ_CP030271.1"/>
</dbReference>
<dbReference type="RefSeq" id="YP_352670.1">
    <property type="nucleotide sequence ID" value="NC_007493.2"/>
</dbReference>
<dbReference type="SMR" id="Q3J365"/>
<dbReference type="STRING" id="272943.RSP_2612"/>
<dbReference type="EnsemblBacteria" id="ABA78769">
    <property type="protein sequence ID" value="ABA78769"/>
    <property type="gene ID" value="RSP_2612"/>
</dbReference>
<dbReference type="KEGG" id="rsp:RSP_2612"/>
<dbReference type="PATRIC" id="fig|272943.9.peg.1530"/>
<dbReference type="eggNOG" id="COG0332">
    <property type="taxonomic scope" value="Bacteria"/>
</dbReference>
<dbReference type="OrthoDB" id="9815506at2"/>
<dbReference type="PhylomeDB" id="Q3J365"/>
<dbReference type="UniPathway" id="UPA00094"/>
<dbReference type="Proteomes" id="UP000002703">
    <property type="component" value="Chromosome 1"/>
</dbReference>
<dbReference type="GO" id="GO:0005737">
    <property type="term" value="C:cytoplasm"/>
    <property type="evidence" value="ECO:0007669"/>
    <property type="project" value="UniProtKB-SubCell"/>
</dbReference>
<dbReference type="GO" id="GO:0004315">
    <property type="term" value="F:3-oxoacyl-[acyl-carrier-protein] synthase activity"/>
    <property type="evidence" value="ECO:0007669"/>
    <property type="project" value="InterPro"/>
</dbReference>
<dbReference type="GO" id="GO:0033818">
    <property type="term" value="F:beta-ketoacyl-acyl-carrier-protein synthase III activity"/>
    <property type="evidence" value="ECO:0007669"/>
    <property type="project" value="UniProtKB-UniRule"/>
</dbReference>
<dbReference type="GO" id="GO:0006633">
    <property type="term" value="P:fatty acid biosynthetic process"/>
    <property type="evidence" value="ECO:0007669"/>
    <property type="project" value="UniProtKB-UniRule"/>
</dbReference>
<dbReference type="GO" id="GO:0044550">
    <property type="term" value="P:secondary metabolite biosynthetic process"/>
    <property type="evidence" value="ECO:0007669"/>
    <property type="project" value="TreeGrafter"/>
</dbReference>
<dbReference type="CDD" id="cd00830">
    <property type="entry name" value="KAS_III"/>
    <property type="match status" value="1"/>
</dbReference>
<dbReference type="FunFam" id="3.40.47.10:FF:000004">
    <property type="entry name" value="3-oxoacyl-[acyl-carrier-protein] synthase 3"/>
    <property type="match status" value="1"/>
</dbReference>
<dbReference type="Gene3D" id="3.40.47.10">
    <property type="match status" value="1"/>
</dbReference>
<dbReference type="HAMAP" id="MF_01815">
    <property type="entry name" value="FabH"/>
    <property type="match status" value="1"/>
</dbReference>
<dbReference type="InterPro" id="IPR013747">
    <property type="entry name" value="ACP_syn_III_C"/>
</dbReference>
<dbReference type="InterPro" id="IPR013751">
    <property type="entry name" value="ACP_syn_III_N"/>
</dbReference>
<dbReference type="InterPro" id="IPR004655">
    <property type="entry name" value="FabH"/>
</dbReference>
<dbReference type="InterPro" id="IPR016039">
    <property type="entry name" value="Thiolase-like"/>
</dbReference>
<dbReference type="NCBIfam" id="TIGR00747">
    <property type="entry name" value="fabH"/>
    <property type="match status" value="1"/>
</dbReference>
<dbReference type="NCBIfam" id="NF006829">
    <property type="entry name" value="PRK09352.1"/>
    <property type="match status" value="1"/>
</dbReference>
<dbReference type="PANTHER" id="PTHR34069">
    <property type="entry name" value="3-OXOACYL-[ACYL-CARRIER-PROTEIN] SYNTHASE 3"/>
    <property type="match status" value="1"/>
</dbReference>
<dbReference type="PANTHER" id="PTHR34069:SF2">
    <property type="entry name" value="BETA-KETOACYL-[ACYL-CARRIER-PROTEIN] SYNTHASE III"/>
    <property type="match status" value="1"/>
</dbReference>
<dbReference type="Pfam" id="PF08545">
    <property type="entry name" value="ACP_syn_III"/>
    <property type="match status" value="1"/>
</dbReference>
<dbReference type="Pfam" id="PF08541">
    <property type="entry name" value="ACP_syn_III_C"/>
    <property type="match status" value="1"/>
</dbReference>
<dbReference type="SUPFAM" id="SSF53901">
    <property type="entry name" value="Thiolase-like"/>
    <property type="match status" value="1"/>
</dbReference>
<protein>
    <recommendedName>
        <fullName evidence="1">Beta-ketoacyl-[acyl-carrier-protein] synthase III</fullName>
        <shortName evidence="1">Beta-ketoacyl-ACP synthase III</shortName>
        <shortName evidence="1">KAS III</shortName>
        <ecNumber evidence="1">2.3.1.180</ecNumber>
    </recommendedName>
    <alternativeName>
        <fullName evidence="1">3-oxoacyl-[acyl-carrier-protein] synthase 3</fullName>
    </alternativeName>
    <alternativeName>
        <fullName evidence="1">3-oxoacyl-[acyl-carrier-protein] synthase III</fullName>
    </alternativeName>
</protein>
<organism>
    <name type="scientific">Cereibacter sphaeroides (strain ATCC 17023 / DSM 158 / JCM 6121 / CCUG 31486 / LMG 2827 / NBRC 12203 / NCIMB 8253 / ATH 2.4.1.)</name>
    <name type="common">Rhodobacter sphaeroides</name>
    <dbReference type="NCBI Taxonomy" id="272943"/>
    <lineage>
        <taxon>Bacteria</taxon>
        <taxon>Pseudomonadati</taxon>
        <taxon>Pseudomonadota</taxon>
        <taxon>Alphaproteobacteria</taxon>
        <taxon>Rhodobacterales</taxon>
        <taxon>Paracoccaceae</taxon>
        <taxon>Cereibacter</taxon>
    </lineage>
</organism>